<reference key="1">
    <citation type="journal article" date="1998" name="DNA Res.">
        <title>Complete sequence and gene organization of the genome of a hyper-thermophilic archaebacterium, Pyrococcus horikoshii OT3.</title>
        <authorList>
            <person name="Kawarabayasi Y."/>
            <person name="Sawada M."/>
            <person name="Horikawa H."/>
            <person name="Haikawa Y."/>
            <person name="Hino Y."/>
            <person name="Yamamoto S."/>
            <person name="Sekine M."/>
            <person name="Baba S."/>
            <person name="Kosugi H."/>
            <person name="Hosoyama A."/>
            <person name="Nagai Y."/>
            <person name="Sakai M."/>
            <person name="Ogura K."/>
            <person name="Otsuka R."/>
            <person name="Nakazawa H."/>
            <person name="Takamiya M."/>
            <person name="Ohfuku Y."/>
            <person name="Funahashi T."/>
            <person name="Tanaka T."/>
            <person name="Kudoh Y."/>
            <person name="Yamazaki J."/>
            <person name="Kushida N."/>
            <person name="Oguchi A."/>
            <person name="Aoki K."/>
            <person name="Yoshizawa T."/>
            <person name="Nakamura Y."/>
            <person name="Robb F.T."/>
            <person name="Horikoshi K."/>
            <person name="Masuchi Y."/>
            <person name="Shizuya H."/>
            <person name="Kikuchi H."/>
        </authorList>
    </citation>
    <scope>NUCLEOTIDE SEQUENCE [LARGE SCALE GENOMIC DNA]</scope>
    <source>
        <strain>ATCC 700860 / DSM 12428 / JCM 9974 / NBRC 100139 / OT-3</strain>
    </source>
</reference>
<reference key="2">
    <citation type="unpublished observations" date="2001-06">
        <authorList>
            <person name="Medigue C."/>
            <person name="Bocs S."/>
        </authorList>
    </citation>
    <scope>IDENTIFICATION</scope>
</reference>
<comment type="similarity">
    <text evidence="1">Belongs to the eukaryotic ribosomal protein eL31 family.</text>
</comment>
<keyword id="KW-0687">Ribonucleoprotein</keyword>
<keyword id="KW-0689">Ribosomal protein</keyword>
<sequence>MRMIKPGEEVIFTVPIRKVKKIVPRWKRAPRAVKFVREFIARHAKAQEVIISTKVNEKIWERGIEKPPSKLRVKVRVEEEEREGGKVRIAYVDLA</sequence>
<dbReference type="EMBL" id="BA000001">
    <property type="status" value="NOT_ANNOTATED_CDS"/>
    <property type="molecule type" value="Genomic_DNA"/>
</dbReference>
<dbReference type="SMR" id="P58189"/>
<dbReference type="Proteomes" id="UP000000752">
    <property type="component" value="Chromosome"/>
</dbReference>
<dbReference type="GO" id="GO:0022625">
    <property type="term" value="C:cytosolic large ribosomal subunit"/>
    <property type="evidence" value="ECO:0007669"/>
    <property type="project" value="TreeGrafter"/>
</dbReference>
<dbReference type="GO" id="GO:0003735">
    <property type="term" value="F:structural constituent of ribosome"/>
    <property type="evidence" value="ECO:0007669"/>
    <property type="project" value="InterPro"/>
</dbReference>
<dbReference type="GO" id="GO:0002181">
    <property type="term" value="P:cytoplasmic translation"/>
    <property type="evidence" value="ECO:0007669"/>
    <property type="project" value="TreeGrafter"/>
</dbReference>
<dbReference type="CDD" id="cd00463">
    <property type="entry name" value="Ribosomal_L31e"/>
    <property type="match status" value="1"/>
</dbReference>
<dbReference type="FunFam" id="3.10.440.10:FF:000005">
    <property type="entry name" value="50S ribosomal protein L31e"/>
    <property type="match status" value="1"/>
</dbReference>
<dbReference type="Gene3D" id="3.10.440.10">
    <property type="match status" value="1"/>
</dbReference>
<dbReference type="HAMAP" id="MF_00410">
    <property type="entry name" value="Ribosomal_eL31"/>
    <property type="match status" value="1"/>
</dbReference>
<dbReference type="InterPro" id="IPR000054">
    <property type="entry name" value="Ribosomal_eL31"/>
</dbReference>
<dbReference type="InterPro" id="IPR020052">
    <property type="entry name" value="Ribosomal_eL31_CS"/>
</dbReference>
<dbReference type="InterPro" id="IPR023621">
    <property type="entry name" value="Ribosomal_eL31_dom_sf"/>
</dbReference>
<dbReference type="NCBIfam" id="NF002258">
    <property type="entry name" value="PRK01192.1-1"/>
    <property type="match status" value="1"/>
</dbReference>
<dbReference type="PANTHER" id="PTHR10956">
    <property type="entry name" value="60S RIBOSOMAL PROTEIN L31"/>
    <property type="match status" value="1"/>
</dbReference>
<dbReference type="PANTHER" id="PTHR10956:SF0">
    <property type="entry name" value="60S RIBOSOMAL PROTEIN L31"/>
    <property type="match status" value="1"/>
</dbReference>
<dbReference type="Pfam" id="PF01198">
    <property type="entry name" value="Ribosomal_L31e"/>
    <property type="match status" value="1"/>
</dbReference>
<dbReference type="SMART" id="SM01380">
    <property type="entry name" value="Ribosomal_L31e"/>
    <property type="match status" value="1"/>
</dbReference>
<dbReference type="SUPFAM" id="SSF54575">
    <property type="entry name" value="Ribosomal protein L31e"/>
    <property type="match status" value="1"/>
</dbReference>
<dbReference type="PROSITE" id="PS01144">
    <property type="entry name" value="RIBOSOMAL_L31E"/>
    <property type="match status" value="1"/>
</dbReference>
<gene>
    <name type="primary">rpl31e</name>
    <name type="ordered locus">PH0529.1</name>
</gene>
<proteinExistence type="inferred from homology"/>
<protein>
    <recommendedName>
        <fullName evidence="1">Large ribosomal subunit protein eL31</fullName>
    </recommendedName>
    <alternativeName>
        <fullName>50S ribosomal protein L31e</fullName>
    </alternativeName>
</protein>
<organism>
    <name type="scientific">Pyrococcus horikoshii (strain ATCC 700860 / DSM 12428 / JCM 9974 / NBRC 100139 / OT-3)</name>
    <dbReference type="NCBI Taxonomy" id="70601"/>
    <lineage>
        <taxon>Archaea</taxon>
        <taxon>Methanobacteriati</taxon>
        <taxon>Methanobacteriota</taxon>
        <taxon>Thermococci</taxon>
        <taxon>Thermococcales</taxon>
        <taxon>Thermococcaceae</taxon>
        <taxon>Pyrococcus</taxon>
    </lineage>
</organism>
<name>RL31_PYRHO</name>
<evidence type="ECO:0000305" key="1"/>
<accession>P58189</accession>
<feature type="chain" id="PRO_0000153803" description="Large ribosomal subunit protein eL31">
    <location>
        <begin position="1"/>
        <end position="95"/>
    </location>
</feature>